<protein>
    <recommendedName>
        <fullName evidence="1">Deoxyguanosinetriphosphate triphosphohydrolase-like protein</fullName>
    </recommendedName>
</protein>
<gene>
    <name type="ordered locus">Asuc_1615</name>
</gene>
<comment type="similarity">
    <text evidence="1">Belongs to the dGTPase family. Type 2 subfamily.</text>
</comment>
<reference key="1">
    <citation type="journal article" date="2010" name="BMC Genomics">
        <title>A genomic perspective on the potential of Actinobacillus succinogenes for industrial succinate production.</title>
        <authorList>
            <person name="McKinlay J.B."/>
            <person name="Laivenieks M."/>
            <person name="Schindler B.D."/>
            <person name="McKinlay A.A."/>
            <person name="Siddaramappa S."/>
            <person name="Challacombe J.F."/>
            <person name="Lowry S.R."/>
            <person name="Clum A."/>
            <person name="Lapidus A.L."/>
            <person name="Burkhart K.B."/>
            <person name="Harkins V."/>
            <person name="Vieille C."/>
        </authorList>
    </citation>
    <scope>NUCLEOTIDE SEQUENCE [LARGE SCALE GENOMIC DNA]</scope>
    <source>
        <strain>ATCC 55618 / DSM 22257 / CCUG 43843 / 130Z</strain>
    </source>
</reference>
<dbReference type="EMBL" id="CP000746">
    <property type="protein sequence ID" value="ABR74969.1"/>
    <property type="molecule type" value="Genomic_DNA"/>
</dbReference>
<dbReference type="RefSeq" id="WP_012073346.1">
    <property type="nucleotide sequence ID" value="NC_009655.1"/>
</dbReference>
<dbReference type="SMR" id="A6VPS2"/>
<dbReference type="STRING" id="339671.Asuc_1615"/>
<dbReference type="KEGG" id="asu:Asuc_1615"/>
<dbReference type="eggNOG" id="COG0232">
    <property type="taxonomic scope" value="Bacteria"/>
</dbReference>
<dbReference type="HOGENOM" id="CLU_028163_0_0_6"/>
<dbReference type="OrthoDB" id="9803619at2"/>
<dbReference type="Proteomes" id="UP000001114">
    <property type="component" value="Chromosome"/>
</dbReference>
<dbReference type="GO" id="GO:0008832">
    <property type="term" value="F:dGTPase activity"/>
    <property type="evidence" value="ECO:0007669"/>
    <property type="project" value="TreeGrafter"/>
</dbReference>
<dbReference type="GO" id="GO:0006203">
    <property type="term" value="P:dGTP catabolic process"/>
    <property type="evidence" value="ECO:0007669"/>
    <property type="project" value="TreeGrafter"/>
</dbReference>
<dbReference type="CDD" id="cd00077">
    <property type="entry name" value="HDc"/>
    <property type="match status" value="1"/>
</dbReference>
<dbReference type="Gene3D" id="1.10.3210.10">
    <property type="entry name" value="Hypothetical protein af1432"/>
    <property type="match status" value="2"/>
</dbReference>
<dbReference type="HAMAP" id="MF_01212">
    <property type="entry name" value="dGTPase_type2"/>
    <property type="match status" value="1"/>
</dbReference>
<dbReference type="InterPro" id="IPR006261">
    <property type="entry name" value="dGTPase"/>
</dbReference>
<dbReference type="InterPro" id="IPR050135">
    <property type="entry name" value="dGTPase-like"/>
</dbReference>
<dbReference type="InterPro" id="IPR023023">
    <property type="entry name" value="dNTPase_2"/>
</dbReference>
<dbReference type="InterPro" id="IPR003607">
    <property type="entry name" value="HD/PDEase_dom"/>
</dbReference>
<dbReference type="InterPro" id="IPR006674">
    <property type="entry name" value="HD_domain"/>
</dbReference>
<dbReference type="InterPro" id="IPR026875">
    <property type="entry name" value="PHydrolase_assoc_dom"/>
</dbReference>
<dbReference type="NCBIfam" id="NF041026">
    <property type="entry name" value="antiphage_dGTPase"/>
    <property type="match status" value="1"/>
</dbReference>
<dbReference type="NCBIfam" id="TIGR01353">
    <property type="entry name" value="dGTP_triPase"/>
    <property type="match status" value="1"/>
</dbReference>
<dbReference type="NCBIfam" id="NF003701">
    <property type="entry name" value="PRK05318.1"/>
    <property type="match status" value="1"/>
</dbReference>
<dbReference type="PANTHER" id="PTHR11373:SF40">
    <property type="entry name" value="DEOXYGUANOSINETRIPHOSPHATE TRIPHOSPHOHYDROLASE-LIKE PROTEIN 2"/>
    <property type="match status" value="1"/>
</dbReference>
<dbReference type="PANTHER" id="PTHR11373">
    <property type="entry name" value="DEOXYNUCLEOSIDE TRIPHOSPHATE TRIPHOSPHOHYDROLASE"/>
    <property type="match status" value="1"/>
</dbReference>
<dbReference type="Pfam" id="PF01966">
    <property type="entry name" value="HD"/>
    <property type="match status" value="1"/>
</dbReference>
<dbReference type="Pfam" id="PF13286">
    <property type="entry name" value="HD_assoc"/>
    <property type="match status" value="1"/>
</dbReference>
<dbReference type="SMART" id="SM00471">
    <property type="entry name" value="HDc"/>
    <property type="match status" value="1"/>
</dbReference>
<dbReference type="SUPFAM" id="SSF109604">
    <property type="entry name" value="HD-domain/PDEase-like"/>
    <property type="match status" value="1"/>
</dbReference>
<dbReference type="PROSITE" id="PS51831">
    <property type="entry name" value="HD"/>
    <property type="match status" value="1"/>
</dbReference>
<proteinExistence type="inferred from homology"/>
<accession>A6VPS2</accession>
<sequence>MILSVNSAWLERFQADRPREKDHRPPFRRDRARILHSAAFRCLQAKTQIHAVGENDFYRTRLTHSLEVAQIGSSLASQLRFTEAFTSLTEQLNCSSKELESVLKPLLPSNDLIETLCFAHDIGHPPFGHGGETALNAMMRHSGGFEGNAQTFRIVTKLEPYTEKAGMNLTRRTVLGLVKYPAILDEASPQYSLLDLPHPTDLGHLRQIDWRPSKGLYRDDLTMINWLLKPLSDTDRRLFTSFRKVRSNFQEFLKTVYKSLDCSIMELADDIAYGVHDLEDAVVVGLISQSQWQAAYDELKNCSSDWMRKNVDTLTQKLFSDYHYERKNAIGALVNYFITHVRWKMTADFTDPLLRYNAELPDDVICVLNIFKDFVFKYVIRDVETQRIEFRGQRILTDMFQIFESDPERLLPRNTVKRWQNAEAEGRKRIICDYIAGMSDAYALRVHRQLS</sequence>
<keyword id="KW-0378">Hydrolase</keyword>
<keyword id="KW-1185">Reference proteome</keyword>
<feature type="chain" id="PRO_1000138912" description="Deoxyguanosinetriphosphate triphosphohydrolase-like protein">
    <location>
        <begin position="1"/>
        <end position="451"/>
    </location>
</feature>
<feature type="domain" description="HD" evidence="2">
    <location>
        <begin position="61"/>
        <end position="274"/>
    </location>
</feature>
<organism>
    <name type="scientific">Actinobacillus succinogenes (strain ATCC 55618 / DSM 22257 / CCUG 43843 / 130Z)</name>
    <dbReference type="NCBI Taxonomy" id="339671"/>
    <lineage>
        <taxon>Bacteria</taxon>
        <taxon>Pseudomonadati</taxon>
        <taxon>Pseudomonadota</taxon>
        <taxon>Gammaproteobacteria</taxon>
        <taxon>Pasteurellales</taxon>
        <taxon>Pasteurellaceae</taxon>
        <taxon>Actinobacillus</taxon>
    </lineage>
</organism>
<name>DGTL1_ACTSZ</name>
<evidence type="ECO:0000255" key="1">
    <source>
        <dbReference type="HAMAP-Rule" id="MF_01212"/>
    </source>
</evidence>
<evidence type="ECO:0000255" key="2">
    <source>
        <dbReference type="PROSITE-ProRule" id="PRU01175"/>
    </source>
</evidence>